<accession>Q60483</accession>
<name>ADRB3_CAVPO</name>
<keyword id="KW-1003">Cell membrane</keyword>
<keyword id="KW-1015">Disulfide bond</keyword>
<keyword id="KW-0297">G-protein coupled receptor</keyword>
<keyword id="KW-0325">Glycoprotein</keyword>
<keyword id="KW-0472">Membrane</keyword>
<keyword id="KW-0675">Receptor</keyword>
<keyword id="KW-1185">Reference proteome</keyword>
<keyword id="KW-0807">Transducer</keyword>
<keyword id="KW-0812">Transmembrane</keyword>
<keyword id="KW-1133">Transmembrane helix</keyword>
<protein>
    <recommendedName>
        <fullName>Beta-3 adrenergic receptor</fullName>
    </recommendedName>
    <alternativeName>
        <fullName>Beta-3 adrenoreceptor</fullName>
        <shortName>Beta-3 adrenoceptor</shortName>
    </alternativeName>
</protein>
<reference key="1">
    <citation type="journal article" date="1996" name="Am. J. Physiol.">
        <title>Beta 3-adrenoceptor in guinea pig brown and white adipocytes: low expression and lack of function.</title>
        <authorList>
            <person name="Atgie C."/>
            <person name="Tavernier G."/>
            <person name="D'Allaire F."/>
            <person name="Bengtsson T."/>
            <person name="Marti L."/>
            <person name="Carpene C."/>
            <person name="Lafontan M."/>
            <person name="Bukowiecki L.J."/>
            <person name="Langin D."/>
        </authorList>
    </citation>
    <scope>NUCLEOTIDE SEQUENCE [MRNA]</scope>
    <source>
        <tissue>Liver</tissue>
    </source>
</reference>
<feature type="chain" id="PRO_0000069141" description="Beta-3 adrenergic receptor">
    <location>
        <begin position="1"/>
        <end position="351" status="greater than"/>
    </location>
</feature>
<feature type="topological domain" description="Extracellular" evidence="1">
    <location>
        <begin position="1"/>
        <end position="36"/>
    </location>
</feature>
<feature type="transmembrane region" description="Helical; Name=1" evidence="1">
    <location>
        <begin position="37"/>
        <end position="60"/>
    </location>
</feature>
<feature type="topological domain" description="Cytoplasmic" evidence="1">
    <location>
        <begin position="61"/>
        <end position="69"/>
    </location>
</feature>
<feature type="transmembrane region" description="Helical; Name=2" evidence="1">
    <location>
        <begin position="70"/>
        <end position="88"/>
    </location>
</feature>
<feature type="topological domain" description="Extracellular" evidence="1">
    <location>
        <begin position="89"/>
        <end position="108"/>
    </location>
</feature>
<feature type="transmembrane region" description="Helical; Name=3" evidence="1">
    <location>
        <begin position="109"/>
        <end position="130"/>
    </location>
</feature>
<feature type="topological domain" description="Cytoplasmic" evidence="1">
    <location>
        <begin position="131"/>
        <end position="152"/>
    </location>
</feature>
<feature type="transmembrane region" description="Helical; Name=4" evidence="1">
    <location>
        <begin position="153"/>
        <end position="175"/>
    </location>
</feature>
<feature type="topological domain" description="Extracellular" evidence="1">
    <location>
        <begin position="176"/>
        <end position="200"/>
    </location>
</feature>
<feature type="transmembrane region" description="Helical; Name=5" evidence="1">
    <location>
        <begin position="201"/>
        <end position="222"/>
    </location>
</feature>
<feature type="topological domain" description="Cytoplasmic" evidence="1">
    <location>
        <begin position="223"/>
        <end position="290"/>
    </location>
</feature>
<feature type="transmembrane region" description="Helical; Name=6" evidence="1">
    <location>
        <begin position="291"/>
        <end position="312"/>
    </location>
</feature>
<feature type="topological domain" description="Extracellular" evidence="1">
    <location>
        <begin position="313"/>
        <end position="324"/>
    </location>
</feature>
<feature type="transmembrane region" description="Helical; Name=7" evidence="1">
    <location>
        <begin position="325"/>
        <end position="345"/>
    </location>
</feature>
<feature type="topological domain" description="Cytoplasmic" evidence="1">
    <location>
        <begin position="346"/>
        <end position="351" status="greater than"/>
    </location>
</feature>
<feature type="region of interest" description="Disordered" evidence="5">
    <location>
        <begin position="1"/>
        <end position="25"/>
    </location>
</feature>
<feature type="region of interest" description="Disordered" evidence="5">
    <location>
        <begin position="245"/>
        <end position="274"/>
    </location>
</feature>
<feature type="compositionally biased region" description="Low complexity" evidence="5">
    <location>
        <begin position="247"/>
        <end position="258"/>
    </location>
</feature>
<feature type="glycosylation site" description="N-linked (GlcNAc...) asparagine" evidence="3">
    <location>
        <position position="8"/>
    </location>
</feature>
<feature type="glycosylation site" description="N-linked (GlcNAc...) asparagine" evidence="3">
    <location>
        <position position="26"/>
    </location>
</feature>
<feature type="disulfide bond" evidence="4">
    <location>
        <begin position="107"/>
        <end position="193"/>
    </location>
</feature>
<feature type="disulfide bond" evidence="4">
    <location>
        <begin position="186"/>
        <end position="192"/>
    </location>
</feature>
<feature type="non-terminal residue">
    <location>
        <position position="351"/>
    </location>
</feature>
<dbReference type="EMBL" id="U51098">
    <property type="protein sequence ID" value="AAA96315.1"/>
    <property type="molecule type" value="mRNA"/>
</dbReference>
<dbReference type="SMR" id="Q60483"/>
<dbReference type="FunCoup" id="Q60483">
    <property type="interactions" value="636"/>
</dbReference>
<dbReference type="GlyCosmos" id="Q60483">
    <property type="glycosylation" value="2 sites, No reported glycans"/>
</dbReference>
<dbReference type="InParanoid" id="Q60483"/>
<dbReference type="Proteomes" id="UP000005447">
    <property type="component" value="Unassembled WGS sequence"/>
</dbReference>
<dbReference type="GO" id="GO:0005886">
    <property type="term" value="C:plasma membrane"/>
    <property type="evidence" value="ECO:0007669"/>
    <property type="project" value="UniProtKB-SubCell"/>
</dbReference>
<dbReference type="GO" id="GO:0043235">
    <property type="term" value="C:receptor complex"/>
    <property type="evidence" value="ECO:0000250"/>
    <property type="project" value="HGNC-UCL"/>
</dbReference>
<dbReference type="GO" id="GO:0004939">
    <property type="term" value="F:beta-adrenergic receptor activity"/>
    <property type="evidence" value="ECO:0000250"/>
    <property type="project" value="HGNC-UCL"/>
</dbReference>
<dbReference type="GO" id="GO:0015052">
    <property type="term" value="F:beta3-adrenergic receptor activity"/>
    <property type="evidence" value="ECO:0000250"/>
    <property type="project" value="HGNC-UCL"/>
</dbReference>
<dbReference type="GO" id="GO:0051379">
    <property type="term" value="F:epinephrine binding"/>
    <property type="evidence" value="ECO:0007669"/>
    <property type="project" value="TreeGrafter"/>
</dbReference>
<dbReference type="GO" id="GO:0042803">
    <property type="term" value="F:protein homodimerization activity"/>
    <property type="evidence" value="ECO:0000250"/>
    <property type="project" value="HGNC-UCL"/>
</dbReference>
<dbReference type="GO" id="GO:0071880">
    <property type="term" value="P:adenylate cyclase-activating adrenergic receptor signaling pathway"/>
    <property type="evidence" value="ECO:0000250"/>
    <property type="project" value="HGNC-UCL"/>
</dbReference>
<dbReference type="GO" id="GO:0002025">
    <property type="term" value="P:norepinephrine-epinephrine-mediated vasodilation involved in regulation of systemic arterial blood pressure"/>
    <property type="evidence" value="ECO:0007669"/>
    <property type="project" value="TreeGrafter"/>
</dbReference>
<dbReference type="GO" id="GO:0043410">
    <property type="term" value="P:positive regulation of MAPK cascade"/>
    <property type="evidence" value="ECO:0000250"/>
    <property type="project" value="HGNC-UCL"/>
</dbReference>
<dbReference type="Gene3D" id="1.20.1070.10">
    <property type="entry name" value="Rhodopsin 7-helix transmembrane proteins"/>
    <property type="match status" value="1"/>
</dbReference>
<dbReference type="InterPro" id="IPR002233">
    <property type="entry name" value="ADR_fam"/>
</dbReference>
<dbReference type="InterPro" id="IPR000681">
    <property type="entry name" value="ADRB3_rcpt"/>
</dbReference>
<dbReference type="InterPro" id="IPR000276">
    <property type="entry name" value="GPCR_Rhodpsn"/>
</dbReference>
<dbReference type="InterPro" id="IPR017452">
    <property type="entry name" value="GPCR_Rhodpsn_7TM"/>
</dbReference>
<dbReference type="PANTHER" id="PTHR24248">
    <property type="entry name" value="ADRENERGIC RECEPTOR-RELATED G-PROTEIN COUPLED RECEPTOR"/>
    <property type="match status" value="1"/>
</dbReference>
<dbReference type="PANTHER" id="PTHR24248:SF3">
    <property type="entry name" value="BETA-3 ADRENERGIC RECEPTOR"/>
    <property type="match status" value="1"/>
</dbReference>
<dbReference type="Pfam" id="PF00001">
    <property type="entry name" value="7tm_1"/>
    <property type="match status" value="1"/>
</dbReference>
<dbReference type="PRINTS" id="PR01103">
    <property type="entry name" value="ADRENERGICR"/>
</dbReference>
<dbReference type="PRINTS" id="PR00563">
    <property type="entry name" value="ADRENRGCB3AR"/>
</dbReference>
<dbReference type="PRINTS" id="PR00237">
    <property type="entry name" value="GPCRRHODOPSN"/>
</dbReference>
<dbReference type="SMART" id="SM01381">
    <property type="entry name" value="7TM_GPCR_Srsx"/>
    <property type="match status" value="1"/>
</dbReference>
<dbReference type="SUPFAM" id="SSF81321">
    <property type="entry name" value="Family A G protein-coupled receptor-like"/>
    <property type="match status" value="1"/>
</dbReference>
<dbReference type="PROSITE" id="PS00237">
    <property type="entry name" value="G_PROTEIN_RECEP_F1_1"/>
    <property type="match status" value="1"/>
</dbReference>
<dbReference type="PROSITE" id="PS50262">
    <property type="entry name" value="G_PROTEIN_RECEP_F1_2"/>
    <property type="match status" value="1"/>
</dbReference>
<comment type="function">
    <text>Beta-adrenergic receptors mediate the catecholamine-induced activation of adenylate cyclase through the action of G proteins. Beta-3 is involved in the regulation of lipolysis and thermogenesis.</text>
</comment>
<comment type="subunit">
    <text evidence="2">Interacts with ARRDC3.</text>
</comment>
<comment type="subcellular location">
    <subcellularLocation>
        <location>Cell membrane</location>
        <topology>Multi-pass membrane protein</topology>
    </subcellularLocation>
</comment>
<comment type="tissue specificity">
    <text>White and brown adipose tissues, and digestive tract.</text>
</comment>
<comment type="miscellaneous">
    <text>The guinea pig differs from other rodents by an absence of beta-3 adrenergic effects and by low expression in brown and white adipose tissues. It is closer to human or primate than rodent beta-3.</text>
</comment>
<comment type="similarity">
    <text evidence="4">Belongs to the G-protein coupled receptor 1 family. Adrenergic receptor subfamily. ADRB3 sub-subfamily.</text>
</comment>
<proteinExistence type="evidence at transcript level"/>
<sequence>MAPWPHENSSAAPWPDTPTLAPNTANTSGLPGVPWAAALAGALLALATVGGNLLVIVAIACTPRLQTMTNVFVTSLAAADLVVGLLVVPPGATLALTGHWPLGATGCELWTSVDVLCVTASIETLCALAVDRYLAVTNPLRYRAVVTKRRARAAVALVWAVAAAVSFAPIMSQWWRAGADAEAQLCHGNPRCCAFVSNVPYALLSSSVSFYLPLLVMLFVYARVFLVAQRQLRLLREEVGRFPPQGSPRIRSRSASPAQGGGMRTAPAGEAPCGPRPARLLPLRERRALRTLGLIVGTFALCWLPFFLANVLRALGGPSLVPNSVLLPLNWLGYVNSAFNPLIYCRSPDFR</sequence>
<gene>
    <name type="primary">ADRB3</name>
</gene>
<organism>
    <name type="scientific">Cavia porcellus</name>
    <name type="common">Guinea pig</name>
    <dbReference type="NCBI Taxonomy" id="10141"/>
    <lineage>
        <taxon>Eukaryota</taxon>
        <taxon>Metazoa</taxon>
        <taxon>Chordata</taxon>
        <taxon>Craniata</taxon>
        <taxon>Vertebrata</taxon>
        <taxon>Euteleostomi</taxon>
        <taxon>Mammalia</taxon>
        <taxon>Eutheria</taxon>
        <taxon>Euarchontoglires</taxon>
        <taxon>Glires</taxon>
        <taxon>Rodentia</taxon>
        <taxon>Hystricomorpha</taxon>
        <taxon>Caviidae</taxon>
        <taxon>Cavia</taxon>
    </lineage>
</organism>
<evidence type="ECO:0000250" key="1"/>
<evidence type="ECO:0000250" key="2">
    <source>
        <dbReference type="UniProtKB" id="P13945"/>
    </source>
</evidence>
<evidence type="ECO:0000255" key="3"/>
<evidence type="ECO:0000255" key="4">
    <source>
        <dbReference type="PROSITE-ProRule" id="PRU00521"/>
    </source>
</evidence>
<evidence type="ECO:0000256" key="5">
    <source>
        <dbReference type="SAM" id="MobiDB-lite"/>
    </source>
</evidence>